<name>U84A4_ARATH</name>
<proteinExistence type="evidence at protein level"/>
<keyword id="KW-0328">Glycosyltransferase</keyword>
<keyword id="KW-1185">Reference proteome</keyword>
<keyword id="KW-0808">Transferase</keyword>
<gene>
    <name evidence="4" type="primary">UGT84A4</name>
    <name evidence="7" type="ordered locus">At4g15500</name>
    <name evidence="8" type="ORF">dl3790c</name>
    <name evidence="9" type="ORF">FCAALL.307</name>
</gene>
<feature type="chain" id="PRO_0000409123" description="UDP-glycosyltransferase 84A4">
    <location>
        <begin position="1"/>
        <end position="475"/>
    </location>
</feature>
<feature type="active site" description="Proton acceptor" evidence="1">
    <location>
        <position position="20"/>
    </location>
</feature>
<feature type="binding site" evidence="2">
    <location>
        <position position="20"/>
    </location>
    <ligand>
        <name>an anthocyanidin</name>
        <dbReference type="ChEBI" id="CHEBI:143576"/>
    </ligand>
</feature>
<feature type="binding site" evidence="1">
    <location>
        <position position="342"/>
    </location>
    <ligand>
        <name>UDP-alpha-D-glucose</name>
        <dbReference type="ChEBI" id="CHEBI:58885"/>
    </ligand>
</feature>
<feature type="binding site" evidence="1">
    <location>
        <position position="357"/>
    </location>
    <ligand>
        <name>UDP-alpha-D-glucose</name>
        <dbReference type="ChEBI" id="CHEBI:58885"/>
    </ligand>
</feature>
<feature type="binding site" evidence="1">
    <location>
        <position position="360"/>
    </location>
    <ligand>
        <name>UDP-alpha-D-glucose</name>
        <dbReference type="ChEBI" id="CHEBI:58885"/>
    </ligand>
</feature>
<feature type="binding site" evidence="1">
    <location>
        <position position="361"/>
    </location>
    <ligand>
        <name>UDP-alpha-D-glucose</name>
        <dbReference type="ChEBI" id="CHEBI:58885"/>
    </ligand>
</feature>
<feature type="binding site" evidence="1">
    <location>
        <position position="362"/>
    </location>
    <ligand>
        <name>UDP-alpha-D-glucose</name>
        <dbReference type="ChEBI" id="CHEBI:58885"/>
    </ligand>
</feature>
<feature type="binding site" evidence="1">
    <location>
        <position position="365"/>
    </location>
    <ligand>
        <name>UDP-alpha-D-glucose</name>
        <dbReference type="ChEBI" id="CHEBI:58885"/>
    </ligand>
</feature>
<feature type="binding site" evidence="2">
    <location>
        <position position="380"/>
    </location>
    <ligand>
        <name>an anthocyanidin</name>
        <dbReference type="ChEBI" id="CHEBI:143576"/>
    </ligand>
</feature>
<feature type="binding site" evidence="1">
    <location>
        <position position="381"/>
    </location>
    <ligand>
        <name>UDP-alpha-D-glucose</name>
        <dbReference type="ChEBI" id="CHEBI:58885"/>
    </ligand>
</feature>
<feature type="binding site" evidence="1">
    <location>
        <position position="382"/>
    </location>
    <ligand>
        <name>UDP-alpha-D-glucose</name>
        <dbReference type="ChEBI" id="CHEBI:58885"/>
    </ligand>
</feature>
<reference key="1">
    <citation type="journal article" date="1998" name="Nature">
        <title>Analysis of 1.9 Mb of contiguous sequence from chromosome 4 of Arabidopsis thaliana.</title>
        <authorList>
            <person name="Bevan M."/>
            <person name="Bancroft I."/>
            <person name="Bent E."/>
            <person name="Love K."/>
            <person name="Goodman H.M."/>
            <person name="Dean C."/>
            <person name="Bergkamp R."/>
            <person name="Dirkse W."/>
            <person name="van Staveren M."/>
            <person name="Stiekema W."/>
            <person name="Drost L."/>
            <person name="Ridley P."/>
            <person name="Hudson S.-A."/>
            <person name="Patel K."/>
            <person name="Murphy G."/>
            <person name="Piffanelli P."/>
            <person name="Wedler H."/>
            <person name="Wedler E."/>
            <person name="Wambutt R."/>
            <person name="Weitzenegger T."/>
            <person name="Pohl T."/>
            <person name="Terryn N."/>
            <person name="Gielen J."/>
            <person name="Villarroel R."/>
            <person name="De Clercq R."/>
            <person name="van Montagu M."/>
            <person name="Lecharny A."/>
            <person name="Aubourg S."/>
            <person name="Gy I."/>
            <person name="Kreis M."/>
            <person name="Lao N."/>
            <person name="Kavanagh T."/>
            <person name="Hempel S."/>
            <person name="Kotter P."/>
            <person name="Entian K.-D."/>
            <person name="Rieger M."/>
            <person name="Schaefer M."/>
            <person name="Funk B."/>
            <person name="Mueller-Auer S."/>
            <person name="Silvey M."/>
            <person name="James R."/>
            <person name="Monfort A."/>
            <person name="Pons A."/>
            <person name="Puigdomenech P."/>
            <person name="Douka A."/>
            <person name="Voukelatou E."/>
            <person name="Milioni D."/>
            <person name="Hatzopoulos P."/>
            <person name="Piravandi E."/>
            <person name="Obermaier B."/>
            <person name="Hilbert H."/>
            <person name="Duesterhoeft A."/>
            <person name="Moores T."/>
            <person name="Jones J.D.G."/>
            <person name="Eneva T."/>
            <person name="Palme K."/>
            <person name="Benes V."/>
            <person name="Rechmann S."/>
            <person name="Ansorge W."/>
            <person name="Cooke R."/>
            <person name="Berger C."/>
            <person name="Delseny M."/>
            <person name="Voet M."/>
            <person name="Volckaert G."/>
            <person name="Mewes H.-W."/>
            <person name="Klosterman S."/>
            <person name="Schueller C."/>
            <person name="Chalwatzis N."/>
        </authorList>
    </citation>
    <scope>NUCLEOTIDE SEQUENCE [LARGE SCALE GENOMIC DNA]</scope>
    <source>
        <strain>cv. Columbia</strain>
    </source>
</reference>
<reference key="2">
    <citation type="journal article" date="1999" name="Nature">
        <title>Sequence and analysis of chromosome 4 of the plant Arabidopsis thaliana.</title>
        <authorList>
            <person name="Mayer K.F.X."/>
            <person name="Schueller C."/>
            <person name="Wambutt R."/>
            <person name="Murphy G."/>
            <person name="Volckaert G."/>
            <person name="Pohl T."/>
            <person name="Duesterhoeft A."/>
            <person name="Stiekema W."/>
            <person name="Entian K.-D."/>
            <person name="Terryn N."/>
            <person name="Harris B."/>
            <person name="Ansorge W."/>
            <person name="Brandt P."/>
            <person name="Grivell L.A."/>
            <person name="Rieger M."/>
            <person name="Weichselgartner M."/>
            <person name="de Simone V."/>
            <person name="Obermaier B."/>
            <person name="Mache R."/>
            <person name="Mueller M."/>
            <person name="Kreis M."/>
            <person name="Delseny M."/>
            <person name="Puigdomenech P."/>
            <person name="Watson M."/>
            <person name="Schmidtheini T."/>
            <person name="Reichert B."/>
            <person name="Portetelle D."/>
            <person name="Perez-Alonso M."/>
            <person name="Boutry M."/>
            <person name="Bancroft I."/>
            <person name="Vos P."/>
            <person name="Hoheisel J."/>
            <person name="Zimmermann W."/>
            <person name="Wedler H."/>
            <person name="Ridley P."/>
            <person name="Langham S.-A."/>
            <person name="McCullagh B."/>
            <person name="Bilham L."/>
            <person name="Robben J."/>
            <person name="van der Schueren J."/>
            <person name="Grymonprez B."/>
            <person name="Chuang Y.-J."/>
            <person name="Vandenbussche F."/>
            <person name="Braeken M."/>
            <person name="Weltjens I."/>
            <person name="Voet M."/>
            <person name="Bastiaens I."/>
            <person name="Aert R."/>
            <person name="Defoor E."/>
            <person name="Weitzenegger T."/>
            <person name="Bothe G."/>
            <person name="Ramsperger U."/>
            <person name="Hilbert H."/>
            <person name="Braun M."/>
            <person name="Holzer E."/>
            <person name="Brandt A."/>
            <person name="Peters S."/>
            <person name="van Staveren M."/>
            <person name="Dirkse W."/>
            <person name="Mooijman P."/>
            <person name="Klein Lankhorst R."/>
            <person name="Rose M."/>
            <person name="Hauf J."/>
            <person name="Koetter P."/>
            <person name="Berneiser S."/>
            <person name="Hempel S."/>
            <person name="Feldpausch M."/>
            <person name="Lamberth S."/>
            <person name="Van den Daele H."/>
            <person name="De Keyser A."/>
            <person name="Buysshaert C."/>
            <person name="Gielen J."/>
            <person name="Villarroel R."/>
            <person name="De Clercq R."/>
            <person name="van Montagu M."/>
            <person name="Rogers J."/>
            <person name="Cronin A."/>
            <person name="Quail M.A."/>
            <person name="Bray-Allen S."/>
            <person name="Clark L."/>
            <person name="Doggett J."/>
            <person name="Hall S."/>
            <person name="Kay M."/>
            <person name="Lennard N."/>
            <person name="McLay K."/>
            <person name="Mayes R."/>
            <person name="Pettett A."/>
            <person name="Rajandream M.A."/>
            <person name="Lyne M."/>
            <person name="Benes V."/>
            <person name="Rechmann S."/>
            <person name="Borkova D."/>
            <person name="Bloecker H."/>
            <person name="Scharfe M."/>
            <person name="Grimm M."/>
            <person name="Loehnert T.-H."/>
            <person name="Dose S."/>
            <person name="de Haan M."/>
            <person name="Maarse A.C."/>
            <person name="Schaefer M."/>
            <person name="Mueller-Auer S."/>
            <person name="Gabel C."/>
            <person name="Fuchs M."/>
            <person name="Fartmann B."/>
            <person name="Granderath K."/>
            <person name="Dauner D."/>
            <person name="Herzl A."/>
            <person name="Neumann S."/>
            <person name="Argiriou A."/>
            <person name="Vitale D."/>
            <person name="Liguori R."/>
            <person name="Piravandi E."/>
            <person name="Massenet O."/>
            <person name="Quigley F."/>
            <person name="Clabauld G."/>
            <person name="Muendlein A."/>
            <person name="Felber R."/>
            <person name="Schnabl S."/>
            <person name="Hiller R."/>
            <person name="Schmidt W."/>
            <person name="Lecharny A."/>
            <person name="Aubourg S."/>
            <person name="Chefdor F."/>
            <person name="Cooke R."/>
            <person name="Berger C."/>
            <person name="Monfort A."/>
            <person name="Casacuberta E."/>
            <person name="Gibbons T."/>
            <person name="Weber N."/>
            <person name="Vandenbol M."/>
            <person name="Bargues M."/>
            <person name="Terol J."/>
            <person name="Torres A."/>
            <person name="Perez-Perez A."/>
            <person name="Purnelle B."/>
            <person name="Bent E."/>
            <person name="Johnson S."/>
            <person name="Tacon D."/>
            <person name="Jesse T."/>
            <person name="Heijnen L."/>
            <person name="Schwarz S."/>
            <person name="Scholler P."/>
            <person name="Heber S."/>
            <person name="Francs P."/>
            <person name="Bielke C."/>
            <person name="Frishman D."/>
            <person name="Haase D."/>
            <person name="Lemcke K."/>
            <person name="Mewes H.-W."/>
            <person name="Stocker S."/>
            <person name="Zaccaria P."/>
            <person name="Bevan M."/>
            <person name="Wilson R.K."/>
            <person name="de la Bastide M."/>
            <person name="Habermann K."/>
            <person name="Parnell L."/>
            <person name="Dedhia N."/>
            <person name="Gnoj L."/>
            <person name="Schutz K."/>
            <person name="Huang E."/>
            <person name="Spiegel L."/>
            <person name="Sekhon M."/>
            <person name="Murray J."/>
            <person name="Sheet P."/>
            <person name="Cordes M."/>
            <person name="Abu-Threideh J."/>
            <person name="Stoneking T."/>
            <person name="Kalicki J."/>
            <person name="Graves T."/>
            <person name="Harmon G."/>
            <person name="Edwards J."/>
            <person name="Latreille P."/>
            <person name="Courtney L."/>
            <person name="Cloud J."/>
            <person name="Abbott A."/>
            <person name="Scott K."/>
            <person name="Johnson D."/>
            <person name="Minx P."/>
            <person name="Bentley D."/>
            <person name="Fulton B."/>
            <person name="Miller N."/>
            <person name="Greco T."/>
            <person name="Kemp K."/>
            <person name="Kramer J."/>
            <person name="Fulton L."/>
            <person name="Mardis E."/>
            <person name="Dante M."/>
            <person name="Pepin K."/>
            <person name="Hillier L.W."/>
            <person name="Nelson J."/>
            <person name="Spieth J."/>
            <person name="Ryan E."/>
            <person name="Andrews S."/>
            <person name="Geisel C."/>
            <person name="Layman D."/>
            <person name="Du H."/>
            <person name="Ali J."/>
            <person name="Berghoff A."/>
            <person name="Jones K."/>
            <person name="Drone K."/>
            <person name="Cotton M."/>
            <person name="Joshu C."/>
            <person name="Antonoiu B."/>
            <person name="Zidanic M."/>
            <person name="Strong C."/>
            <person name="Sun H."/>
            <person name="Lamar B."/>
            <person name="Yordan C."/>
            <person name="Ma P."/>
            <person name="Zhong J."/>
            <person name="Preston R."/>
            <person name="Vil D."/>
            <person name="Shekher M."/>
            <person name="Matero A."/>
            <person name="Shah R."/>
            <person name="Swaby I.K."/>
            <person name="O'Shaughnessy A."/>
            <person name="Rodriguez M."/>
            <person name="Hoffman J."/>
            <person name="Till S."/>
            <person name="Granat S."/>
            <person name="Shohdy N."/>
            <person name="Hasegawa A."/>
            <person name="Hameed A."/>
            <person name="Lodhi M."/>
            <person name="Johnson A."/>
            <person name="Chen E."/>
            <person name="Marra M.A."/>
            <person name="Martienssen R."/>
            <person name="McCombie W.R."/>
        </authorList>
    </citation>
    <scope>NUCLEOTIDE SEQUENCE [LARGE SCALE GENOMIC DNA]</scope>
    <source>
        <strain>cv. Columbia</strain>
    </source>
</reference>
<reference key="3">
    <citation type="journal article" date="2017" name="Plant J.">
        <title>Araport11: a complete reannotation of the Arabidopsis thaliana reference genome.</title>
        <authorList>
            <person name="Cheng C.Y."/>
            <person name="Krishnakumar V."/>
            <person name="Chan A.P."/>
            <person name="Thibaud-Nissen F."/>
            <person name="Schobel S."/>
            <person name="Town C.D."/>
        </authorList>
    </citation>
    <scope>GENOME REANNOTATION</scope>
    <source>
        <strain>cv. Columbia</strain>
    </source>
</reference>
<reference key="4">
    <citation type="submission" date="2004-04" db="EMBL/GenBank/DDBJ databases">
        <title>Arabidopsis ORF clones.</title>
        <authorList>
            <person name="Shinn P."/>
            <person name="Chen H."/>
            <person name="Cheuk R.F."/>
            <person name="Kim C.J."/>
            <person name="Carninci P."/>
            <person name="Hayashizaki Y."/>
            <person name="Ishida J."/>
            <person name="Kamiya A."/>
            <person name="Kawai J."/>
            <person name="Narusaka M."/>
            <person name="Sakurai T."/>
            <person name="Satou M."/>
            <person name="Seki M."/>
            <person name="Shinozaki K."/>
            <person name="Ecker J.R."/>
        </authorList>
    </citation>
    <scope>NUCLEOTIDE SEQUENCE [LARGE SCALE MRNA]</scope>
    <source>
        <strain>cv. Columbia</strain>
    </source>
</reference>
<reference key="5">
    <citation type="submission" date="2006-07" db="EMBL/GenBank/DDBJ databases">
        <title>Large-scale analysis of RIKEN Arabidopsis full-length (RAFL) cDNAs.</title>
        <authorList>
            <person name="Totoki Y."/>
            <person name="Seki M."/>
            <person name="Ishida J."/>
            <person name="Nakajima M."/>
            <person name="Enju A."/>
            <person name="Kamiya A."/>
            <person name="Narusaka M."/>
            <person name="Shin-i T."/>
            <person name="Nakagawa M."/>
            <person name="Sakamoto N."/>
            <person name="Oishi K."/>
            <person name="Kohara Y."/>
            <person name="Kobayashi M."/>
            <person name="Toyoda A."/>
            <person name="Sakaki Y."/>
            <person name="Sakurai T."/>
            <person name="Iida K."/>
            <person name="Akiyama K."/>
            <person name="Satou M."/>
            <person name="Toyoda T."/>
            <person name="Konagaya A."/>
            <person name="Carninci P."/>
            <person name="Kawai J."/>
            <person name="Hayashizaki Y."/>
            <person name="Shinozaki K."/>
        </authorList>
    </citation>
    <scope>NUCLEOTIDE SEQUENCE [LARGE SCALE MRNA]</scope>
    <source>
        <strain>cv. Columbia</strain>
    </source>
</reference>
<reference key="6">
    <citation type="journal article" date="2000" name="FEBS Lett.">
        <title>Identification of four Arabidopsis genes encoding hydroxycinnamate glucosyltransferases.</title>
        <authorList>
            <person name="Milkowski C."/>
            <person name="Baumert A."/>
            <person name="Strack D."/>
        </authorList>
    </citation>
    <scope>FUNCTION</scope>
    <scope>CATALYTIC ACTIVITY</scope>
</reference>
<reference key="7">
    <citation type="journal article" date="2001" name="J. Biol. Chem.">
        <title>Phylogenetic analysis of the UDP-glycosyltransferase multigene family of Arabidopsis thaliana.</title>
        <authorList>
            <person name="Li Y."/>
            <person name="Baldauf S."/>
            <person name="Lim E.K."/>
            <person name="Bowles D.J."/>
        </authorList>
    </citation>
    <scope>GENE FAMILY</scope>
</reference>
<dbReference type="EC" id="2.4.1.120" evidence="3"/>
<dbReference type="EC" id="2.4.1.177" evidence="3"/>
<dbReference type="EMBL" id="Z97339">
    <property type="protein sequence ID" value="CAB10328.1"/>
    <property type="molecule type" value="Genomic_DNA"/>
</dbReference>
<dbReference type="EMBL" id="AL161541">
    <property type="protein sequence ID" value="CAB78592.1"/>
    <property type="molecule type" value="Genomic_DNA"/>
</dbReference>
<dbReference type="EMBL" id="CP002687">
    <property type="protein sequence ID" value="AEE83611.1"/>
    <property type="molecule type" value="Genomic_DNA"/>
</dbReference>
<dbReference type="EMBL" id="BT012573">
    <property type="protein sequence ID" value="AAS99717.1"/>
    <property type="molecule type" value="mRNA"/>
</dbReference>
<dbReference type="EMBL" id="AK229801">
    <property type="protein sequence ID" value="BAF01632.1"/>
    <property type="molecule type" value="mRNA"/>
</dbReference>
<dbReference type="PIR" id="F71419">
    <property type="entry name" value="F71419"/>
</dbReference>
<dbReference type="RefSeq" id="NP_193285.1">
    <property type="nucleotide sequence ID" value="NM_117640.4"/>
</dbReference>
<dbReference type="SMR" id="O23402"/>
<dbReference type="FunCoup" id="O23402">
    <property type="interactions" value="110"/>
</dbReference>
<dbReference type="STRING" id="3702.O23402"/>
<dbReference type="CAZy" id="GT1">
    <property type="family name" value="Glycosyltransferase Family 1"/>
</dbReference>
<dbReference type="PaxDb" id="3702-AT4G15500.1"/>
<dbReference type="ProteomicsDB" id="242592"/>
<dbReference type="EnsemblPlants" id="AT4G15500.1">
    <property type="protein sequence ID" value="AT4G15500.1"/>
    <property type="gene ID" value="AT4G15500"/>
</dbReference>
<dbReference type="GeneID" id="827222"/>
<dbReference type="Gramene" id="AT4G15500.1">
    <property type="protein sequence ID" value="AT4G15500.1"/>
    <property type="gene ID" value="AT4G15500"/>
</dbReference>
<dbReference type="KEGG" id="ath:AT4G15500"/>
<dbReference type="Araport" id="AT4G15500"/>
<dbReference type="TAIR" id="AT4G15500">
    <property type="gene designation" value="UGT84A4"/>
</dbReference>
<dbReference type="eggNOG" id="KOG1192">
    <property type="taxonomic scope" value="Eukaryota"/>
</dbReference>
<dbReference type="HOGENOM" id="CLU_001724_0_1_1"/>
<dbReference type="InParanoid" id="O23402"/>
<dbReference type="OMA" id="NEDRAMT"/>
<dbReference type="OrthoDB" id="5835829at2759"/>
<dbReference type="PhylomeDB" id="O23402"/>
<dbReference type="BioCyc" id="ARA:AT4G15500-MONOMER"/>
<dbReference type="BRENDA" id="2.4.1.126">
    <property type="organism ID" value="399"/>
</dbReference>
<dbReference type="PRO" id="PR:O23402"/>
<dbReference type="Proteomes" id="UP000006548">
    <property type="component" value="Chromosome 4"/>
</dbReference>
<dbReference type="ExpressionAtlas" id="O23402">
    <property type="expression patterns" value="baseline and differential"/>
</dbReference>
<dbReference type="GO" id="GO:0050412">
    <property type="term" value="F:cinnamate beta-D-glucosyltransferase activity"/>
    <property type="evidence" value="ECO:0007669"/>
    <property type="project" value="UniProtKB-EC"/>
</dbReference>
<dbReference type="GO" id="GO:0047218">
    <property type="term" value="F:hydroxycinnamate 4-beta-glucosyltransferase activity"/>
    <property type="evidence" value="ECO:0007669"/>
    <property type="project" value="RHEA"/>
</dbReference>
<dbReference type="GO" id="GO:0050284">
    <property type="term" value="F:sinapate 1-glucosyltransferase activity"/>
    <property type="evidence" value="ECO:0000250"/>
    <property type="project" value="TAIR"/>
</dbReference>
<dbReference type="CDD" id="cd03784">
    <property type="entry name" value="GT1_Gtf-like"/>
    <property type="match status" value="1"/>
</dbReference>
<dbReference type="FunFam" id="3.40.50.2000:FF:000019">
    <property type="entry name" value="Glycosyltransferase"/>
    <property type="match status" value="1"/>
</dbReference>
<dbReference type="FunFam" id="3.40.50.2000:FF:000101">
    <property type="entry name" value="Glycosyltransferase"/>
    <property type="match status" value="1"/>
</dbReference>
<dbReference type="Gene3D" id="3.40.50.2000">
    <property type="entry name" value="Glycogen Phosphorylase B"/>
    <property type="match status" value="2"/>
</dbReference>
<dbReference type="InterPro" id="IPR002213">
    <property type="entry name" value="UDP_glucos_trans"/>
</dbReference>
<dbReference type="InterPro" id="IPR035595">
    <property type="entry name" value="UDP_glycos_trans_CS"/>
</dbReference>
<dbReference type="PANTHER" id="PTHR11926">
    <property type="entry name" value="GLUCOSYL/GLUCURONOSYL TRANSFERASES"/>
    <property type="match status" value="1"/>
</dbReference>
<dbReference type="PANTHER" id="PTHR11926:SF1299">
    <property type="entry name" value="UDP-GLYCOSYLTRANSFERASE 84A3-RELATED"/>
    <property type="match status" value="1"/>
</dbReference>
<dbReference type="Pfam" id="PF00201">
    <property type="entry name" value="UDPGT"/>
    <property type="match status" value="1"/>
</dbReference>
<dbReference type="SUPFAM" id="SSF53756">
    <property type="entry name" value="UDP-Glycosyltransferase/glycogen phosphorylase"/>
    <property type="match status" value="1"/>
</dbReference>
<dbReference type="PROSITE" id="PS00375">
    <property type="entry name" value="UDPGT"/>
    <property type="match status" value="1"/>
</dbReference>
<comment type="function">
    <text evidence="3">UDP-glucosyltransferase that forms glucose esters with phenylpropanoids (PubMed:11187886). Glucosylates 4-coumarate, ferulate, caffeate, sinapate and cinnamate (PubMed:11187886).</text>
</comment>
<comment type="catalytic activity">
    <reaction evidence="3">
        <text>(E)-4-coumarate + UDP-alpha-D-glucose = 4-O-(beta-D-glucosyl)-trans-4-coumarate + UDP + H(+)</text>
        <dbReference type="Rhea" id="RHEA:21636"/>
        <dbReference type="ChEBI" id="CHEBI:12876"/>
        <dbReference type="ChEBI" id="CHEBI:15378"/>
        <dbReference type="ChEBI" id="CHEBI:58223"/>
        <dbReference type="ChEBI" id="CHEBI:58885"/>
        <dbReference type="ChEBI" id="CHEBI:79066"/>
    </reaction>
</comment>
<comment type="catalytic activity">
    <reaction evidence="3">
        <text>(E)-ferulate + UDP-alpha-D-glucose = 1-O-[(E)-feruloyl]-beta-D-glucose + UDP</text>
        <dbReference type="Rhea" id="RHEA:57468"/>
        <dbReference type="ChEBI" id="CHEBI:29749"/>
        <dbReference type="ChEBI" id="CHEBI:58223"/>
        <dbReference type="ChEBI" id="CHEBI:58885"/>
        <dbReference type="ChEBI" id="CHEBI:81321"/>
    </reaction>
</comment>
<comment type="catalytic activity">
    <reaction evidence="3">
        <text>(E)-caffeate + UDP-alpha-D-glucose = 1-O-[(E)-caffeoyl]-beta-D-glucose + UDP</text>
        <dbReference type="Rhea" id="RHEA:57464"/>
        <dbReference type="ChEBI" id="CHEBI:614"/>
        <dbReference type="ChEBI" id="CHEBI:57770"/>
        <dbReference type="ChEBI" id="CHEBI:58223"/>
        <dbReference type="ChEBI" id="CHEBI:58885"/>
    </reaction>
</comment>
<comment type="catalytic activity">
    <reaction evidence="3">
        <text>(E)-sinapate + UDP-alpha-D-glucose = 1-O-(trans-sinapoyl)-beta-D-glucose + UDP</text>
        <dbReference type="Rhea" id="RHEA:13305"/>
        <dbReference type="ChEBI" id="CHEBI:16546"/>
        <dbReference type="ChEBI" id="CHEBI:30023"/>
        <dbReference type="ChEBI" id="CHEBI:58223"/>
        <dbReference type="ChEBI" id="CHEBI:58885"/>
        <dbReference type="EC" id="2.4.1.120"/>
    </reaction>
</comment>
<comment type="catalytic activity">
    <reaction evidence="3">
        <text>(E)-cinnamate + UDP-alpha-D-glucose = 1-O-(trans-cinnamoyl)-beta-D-glucose + UDP</text>
        <dbReference type="Rhea" id="RHEA:13437"/>
        <dbReference type="ChEBI" id="CHEBI:15669"/>
        <dbReference type="ChEBI" id="CHEBI:16279"/>
        <dbReference type="ChEBI" id="CHEBI:58223"/>
        <dbReference type="ChEBI" id="CHEBI:58885"/>
        <dbReference type="EC" id="2.4.1.177"/>
    </reaction>
</comment>
<comment type="similarity">
    <text evidence="6">Belongs to the UDP-glycosyltransferase family.</text>
</comment>
<organism>
    <name type="scientific">Arabidopsis thaliana</name>
    <name type="common">Mouse-ear cress</name>
    <dbReference type="NCBI Taxonomy" id="3702"/>
    <lineage>
        <taxon>Eukaryota</taxon>
        <taxon>Viridiplantae</taxon>
        <taxon>Streptophyta</taxon>
        <taxon>Embryophyta</taxon>
        <taxon>Tracheophyta</taxon>
        <taxon>Spermatophyta</taxon>
        <taxon>Magnoliopsida</taxon>
        <taxon>eudicotyledons</taxon>
        <taxon>Gunneridae</taxon>
        <taxon>Pentapetalae</taxon>
        <taxon>rosids</taxon>
        <taxon>malvids</taxon>
        <taxon>Brassicales</taxon>
        <taxon>Brassicaceae</taxon>
        <taxon>Camelineae</taxon>
        <taxon>Arabidopsis</taxon>
    </lineage>
</organism>
<protein>
    <recommendedName>
        <fullName evidence="4">UDP-glycosyltransferase 84A4</fullName>
        <ecNumber evidence="3">2.4.1.120</ecNumber>
        <ecNumber evidence="3">2.4.1.177</ecNumber>
    </recommendedName>
    <alternativeName>
        <fullName evidence="5">Hydroxycinnamate glucosyltransferase 1</fullName>
        <shortName evidence="5">AtHCAGT1</shortName>
    </alternativeName>
</protein>
<evidence type="ECO:0000250" key="1">
    <source>
        <dbReference type="UniProtKB" id="A0A0A1HA03"/>
    </source>
</evidence>
<evidence type="ECO:0000250" key="2">
    <source>
        <dbReference type="UniProtKB" id="P51094"/>
    </source>
</evidence>
<evidence type="ECO:0000269" key="3">
    <source>
    </source>
</evidence>
<evidence type="ECO:0000303" key="4">
    <source>
    </source>
</evidence>
<evidence type="ECO:0000303" key="5">
    <source>
    </source>
</evidence>
<evidence type="ECO:0000305" key="6"/>
<evidence type="ECO:0000312" key="7">
    <source>
        <dbReference type="Araport" id="AT4G15500"/>
    </source>
</evidence>
<evidence type="ECO:0000312" key="8">
    <source>
        <dbReference type="EMBL" id="CAB10328.1"/>
    </source>
</evidence>
<evidence type="ECO:0000312" key="9">
    <source>
        <dbReference type="EMBL" id="CAB78592.1"/>
    </source>
</evidence>
<sequence>MEMESSLPHVMLVSFPGQGHISPLLRLGKIIASKGLIVTFVTTEEPLGKKMRQANNIQDGVLKPVGLGFLRFEFFEDGFVYKEDFDLLQKSLEVSGKREIKNLVKKYEKQPVRCLINNAFVPWVCDIAEELQIPSAVLWVQSCACLAAYYYYHHQLVKFPTETEPEITVDVPFKPLTLKHDEIPSFLHPSSPLSSIGGTILEQIKRLHKPFSVLIETFQELEKDTIDHMSQLCPQVNFNPIGPLFTMAKTIRSDIKGDISKPDSDCIEWLDSREPSSVVYISFGTLAFLKQNQIDEIAHGILNSGLSCLWVLRPPLEGLAIEPHVLPLELEEKGKIVEWCQQEKVLAHPAVACFLSHCGWNSTMEALTSGVPVICFPQWGDQVTNAVYMIDVFKTGLRLSRGASDERIVPREEVAERLLEATVGEKAVELRENARRWKEEAESAVAYGGTSERNFQEFVDKLVDVKTMTNINNVV</sequence>
<accession>O23402</accession>